<name>RL23_VIBPA</name>
<organism>
    <name type="scientific">Vibrio parahaemolyticus serotype O3:K6 (strain RIMD 2210633)</name>
    <dbReference type="NCBI Taxonomy" id="223926"/>
    <lineage>
        <taxon>Bacteria</taxon>
        <taxon>Pseudomonadati</taxon>
        <taxon>Pseudomonadota</taxon>
        <taxon>Gammaproteobacteria</taxon>
        <taxon>Vibrionales</taxon>
        <taxon>Vibrionaceae</taxon>
        <taxon>Vibrio</taxon>
    </lineage>
</organism>
<accession>Q87T11</accession>
<comment type="function">
    <text evidence="1">One of the early assembly proteins it binds 23S rRNA. One of the proteins that surrounds the polypeptide exit tunnel on the outside of the ribosome. Forms the main docking site for trigger factor binding to the ribosome.</text>
</comment>
<comment type="subunit">
    <text evidence="1">Part of the 50S ribosomal subunit. Contacts protein L29, and trigger factor when it is bound to the ribosome.</text>
</comment>
<comment type="similarity">
    <text evidence="1">Belongs to the universal ribosomal protein uL23 family.</text>
</comment>
<evidence type="ECO:0000255" key="1">
    <source>
        <dbReference type="HAMAP-Rule" id="MF_01369"/>
    </source>
</evidence>
<evidence type="ECO:0000305" key="2"/>
<proteinExistence type="inferred from homology"/>
<feature type="chain" id="PRO_0000272870" description="Large ribosomal subunit protein uL23">
    <location>
        <begin position="1"/>
        <end position="100"/>
    </location>
</feature>
<sequence>MITEERILKVLRAPHISEKATMAAEKANTIVFKVAKDATKKEIKAAVEKLFEVEVKSVNTLITKGKTKRQGLRQGRRSDVKKAYVTLKEGQDLDFVGGAE</sequence>
<keyword id="KW-0687">Ribonucleoprotein</keyword>
<keyword id="KW-0689">Ribosomal protein</keyword>
<keyword id="KW-0694">RNA-binding</keyword>
<keyword id="KW-0699">rRNA-binding</keyword>
<protein>
    <recommendedName>
        <fullName evidence="1">Large ribosomal subunit protein uL23</fullName>
    </recommendedName>
    <alternativeName>
        <fullName evidence="2">50S ribosomal protein L23</fullName>
    </alternativeName>
</protein>
<reference key="1">
    <citation type="journal article" date="2003" name="Lancet">
        <title>Genome sequence of Vibrio parahaemolyticus: a pathogenic mechanism distinct from that of V. cholerae.</title>
        <authorList>
            <person name="Makino K."/>
            <person name="Oshima K."/>
            <person name="Kurokawa K."/>
            <person name="Yokoyama K."/>
            <person name="Uda T."/>
            <person name="Tagomori K."/>
            <person name="Iijima Y."/>
            <person name="Najima M."/>
            <person name="Nakano M."/>
            <person name="Yamashita A."/>
            <person name="Kubota Y."/>
            <person name="Kimura S."/>
            <person name="Yasunaga T."/>
            <person name="Honda T."/>
            <person name="Shinagawa H."/>
            <person name="Hattori M."/>
            <person name="Iida T."/>
        </authorList>
    </citation>
    <scope>NUCLEOTIDE SEQUENCE [LARGE SCALE GENOMIC DNA]</scope>
    <source>
        <strain>RIMD 2210633</strain>
    </source>
</reference>
<gene>
    <name evidence="1" type="primary">rplW</name>
    <name type="ordered locus">VP0259</name>
</gene>
<dbReference type="EMBL" id="BA000031">
    <property type="protein sequence ID" value="BAC58522.1"/>
    <property type="molecule type" value="Genomic_DNA"/>
</dbReference>
<dbReference type="RefSeq" id="NP_796638.1">
    <property type="nucleotide sequence ID" value="NC_004603.1"/>
</dbReference>
<dbReference type="RefSeq" id="WP_004398471.1">
    <property type="nucleotide sequence ID" value="NC_004603.1"/>
</dbReference>
<dbReference type="SMR" id="Q87T11"/>
<dbReference type="GeneID" id="97539800"/>
<dbReference type="KEGG" id="vpa:VP0259"/>
<dbReference type="PATRIC" id="fig|223926.6.peg.250"/>
<dbReference type="eggNOG" id="COG0089">
    <property type="taxonomic scope" value="Bacteria"/>
</dbReference>
<dbReference type="HOGENOM" id="CLU_037562_3_1_6"/>
<dbReference type="PRO" id="PR:Q87T11"/>
<dbReference type="Proteomes" id="UP000002493">
    <property type="component" value="Chromosome 1"/>
</dbReference>
<dbReference type="GO" id="GO:1990904">
    <property type="term" value="C:ribonucleoprotein complex"/>
    <property type="evidence" value="ECO:0007669"/>
    <property type="project" value="UniProtKB-KW"/>
</dbReference>
<dbReference type="GO" id="GO:0005840">
    <property type="term" value="C:ribosome"/>
    <property type="evidence" value="ECO:0007669"/>
    <property type="project" value="UniProtKB-KW"/>
</dbReference>
<dbReference type="GO" id="GO:0019843">
    <property type="term" value="F:rRNA binding"/>
    <property type="evidence" value="ECO:0007669"/>
    <property type="project" value="UniProtKB-UniRule"/>
</dbReference>
<dbReference type="GO" id="GO:0003735">
    <property type="term" value="F:structural constituent of ribosome"/>
    <property type="evidence" value="ECO:0007669"/>
    <property type="project" value="InterPro"/>
</dbReference>
<dbReference type="GO" id="GO:0006412">
    <property type="term" value="P:translation"/>
    <property type="evidence" value="ECO:0007669"/>
    <property type="project" value="UniProtKB-UniRule"/>
</dbReference>
<dbReference type="FunFam" id="3.30.70.330:FF:000001">
    <property type="entry name" value="50S ribosomal protein L23"/>
    <property type="match status" value="1"/>
</dbReference>
<dbReference type="Gene3D" id="3.30.70.330">
    <property type="match status" value="1"/>
</dbReference>
<dbReference type="HAMAP" id="MF_01369_B">
    <property type="entry name" value="Ribosomal_uL23_B"/>
    <property type="match status" value="1"/>
</dbReference>
<dbReference type="InterPro" id="IPR012677">
    <property type="entry name" value="Nucleotide-bd_a/b_plait_sf"/>
</dbReference>
<dbReference type="InterPro" id="IPR013025">
    <property type="entry name" value="Ribosomal_uL23-like"/>
</dbReference>
<dbReference type="InterPro" id="IPR012678">
    <property type="entry name" value="Ribosomal_uL23/eL15/eS24_sf"/>
</dbReference>
<dbReference type="InterPro" id="IPR001014">
    <property type="entry name" value="Ribosomal_uL23_CS"/>
</dbReference>
<dbReference type="NCBIfam" id="NF004358">
    <property type="entry name" value="PRK05738.1-1"/>
    <property type="match status" value="1"/>
</dbReference>
<dbReference type="NCBIfam" id="NF004359">
    <property type="entry name" value="PRK05738.1-3"/>
    <property type="match status" value="1"/>
</dbReference>
<dbReference type="NCBIfam" id="NF004360">
    <property type="entry name" value="PRK05738.1-5"/>
    <property type="match status" value="1"/>
</dbReference>
<dbReference type="NCBIfam" id="NF004363">
    <property type="entry name" value="PRK05738.2-4"/>
    <property type="match status" value="1"/>
</dbReference>
<dbReference type="PANTHER" id="PTHR11620">
    <property type="entry name" value="60S RIBOSOMAL PROTEIN L23A"/>
    <property type="match status" value="1"/>
</dbReference>
<dbReference type="Pfam" id="PF00276">
    <property type="entry name" value="Ribosomal_L23"/>
    <property type="match status" value="1"/>
</dbReference>
<dbReference type="SUPFAM" id="SSF54189">
    <property type="entry name" value="Ribosomal proteins S24e, L23 and L15e"/>
    <property type="match status" value="1"/>
</dbReference>
<dbReference type="PROSITE" id="PS00050">
    <property type="entry name" value="RIBOSOMAL_L23"/>
    <property type="match status" value="1"/>
</dbReference>